<gene>
    <name evidence="1" type="primary">rpmC</name>
    <name type="ordered locus">CC_1256</name>
</gene>
<protein>
    <recommendedName>
        <fullName evidence="1">Large ribosomal subunit protein uL29</fullName>
    </recommendedName>
    <alternativeName>
        <fullName evidence="2">50S ribosomal protein L29</fullName>
    </alternativeName>
</protein>
<organism>
    <name type="scientific">Caulobacter vibrioides (strain ATCC 19089 / CIP 103742 / CB 15)</name>
    <name type="common">Caulobacter crescentus</name>
    <dbReference type="NCBI Taxonomy" id="190650"/>
    <lineage>
        <taxon>Bacteria</taxon>
        <taxon>Pseudomonadati</taxon>
        <taxon>Pseudomonadota</taxon>
        <taxon>Alphaproteobacteria</taxon>
        <taxon>Caulobacterales</taxon>
        <taxon>Caulobacteraceae</taxon>
        <taxon>Caulobacter</taxon>
    </lineage>
</organism>
<sequence>MKIAEIRGMTPDQLADTLISLKKEQFNLRFQAATGQVEKTHRVNEIRKDIARIKTVLRAKAAA</sequence>
<reference key="1">
    <citation type="journal article" date="2001" name="Proc. Natl. Acad. Sci. U.S.A.">
        <title>Complete genome sequence of Caulobacter crescentus.</title>
        <authorList>
            <person name="Nierman W.C."/>
            <person name="Feldblyum T.V."/>
            <person name="Laub M.T."/>
            <person name="Paulsen I.T."/>
            <person name="Nelson K.E."/>
            <person name="Eisen J.A."/>
            <person name="Heidelberg J.F."/>
            <person name="Alley M.R.K."/>
            <person name="Ohta N."/>
            <person name="Maddock J.R."/>
            <person name="Potocka I."/>
            <person name="Nelson W.C."/>
            <person name="Newton A."/>
            <person name="Stephens C."/>
            <person name="Phadke N.D."/>
            <person name="Ely B."/>
            <person name="DeBoy R.T."/>
            <person name="Dodson R.J."/>
            <person name="Durkin A.S."/>
            <person name="Gwinn M.L."/>
            <person name="Haft D.H."/>
            <person name="Kolonay J.F."/>
            <person name="Smit J."/>
            <person name="Craven M.B."/>
            <person name="Khouri H.M."/>
            <person name="Shetty J."/>
            <person name="Berry K.J."/>
            <person name="Utterback T.R."/>
            <person name="Tran K."/>
            <person name="Wolf A.M."/>
            <person name="Vamathevan J.J."/>
            <person name="Ermolaeva M.D."/>
            <person name="White O."/>
            <person name="Salzberg S.L."/>
            <person name="Venter J.C."/>
            <person name="Shapiro L."/>
            <person name="Fraser C.M."/>
        </authorList>
    </citation>
    <scope>NUCLEOTIDE SEQUENCE [LARGE SCALE GENOMIC DNA]</scope>
    <source>
        <strain>ATCC 19089 / CIP 103742 / CB 15</strain>
    </source>
</reference>
<keyword id="KW-1185">Reference proteome</keyword>
<keyword id="KW-0687">Ribonucleoprotein</keyword>
<keyword id="KW-0689">Ribosomal protein</keyword>
<feature type="chain" id="PRO_0000130369" description="Large ribosomal subunit protein uL29">
    <location>
        <begin position="1"/>
        <end position="63"/>
    </location>
</feature>
<evidence type="ECO:0000255" key="1">
    <source>
        <dbReference type="HAMAP-Rule" id="MF_00374"/>
    </source>
</evidence>
<evidence type="ECO:0000305" key="2"/>
<comment type="similarity">
    <text evidence="1">Belongs to the universal ribosomal protein uL29 family.</text>
</comment>
<dbReference type="EMBL" id="AE005673">
    <property type="protein sequence ID" value="AAK23237.1"/>
    <property type="molecule type" value="Genomic_DNA"/>
</dbReference>
<dbReference type="PIR" id="A87405">
    <property type="entry name" value="A87405"/>
</dbReference>
<dbReference type="RefSeq" id="NP_420069.1">
    <property type="nucleotide sequence ID" value="NC_002696.2"/>
</dbReference>
<dbReference type="RefSeq" id="WP_010919135.1">
    <property type="nucleotide sequence ID" value="NC_002696.2"/>
</dbReference>
<dbReference type="SMR" id="Q9A8U5"/>
<dbReference type="STRING" id="190650.CC_1256"/>
<dbReference type="EnsemblBacteria" id="AAK23237">
    <property type="protein sequence ID" value="AAK23237"/>
    <property type="gene ID" value="CC_1256"/>
</dbReference>
<dbReference type="KEGG" id="ccr:CC_1256"/>
<dbReference type="PATRIC" id="fig|190650.5.peg.1281"/>
<dbReference type="eggNOG" id="COG0255">
    <property type="taxonomic scope" value="Bacteria"/>
</dbReference>
<dbReference type="HOGENOM" id="CLU_158491_1_0_5"/>
<dbReference type="BioCyc" id="CAULO:CC1256-MONOMER"/>
<dbReference type="Proteomes" id="UP000001816">
    <property type="component" value="Chromosome"/>
</dbReference>
<dbReference type="GO" id="GO:0022625">
    <property type="term" value="C:cytosolic large ribosomal subunit"/>
    <property type="evidence" value="ECO:0007669"/>
    <property type="project" value="TreeGrafter"/>
</dbReference>
<dbReference type="GO" id="GO:0003735">
    <property type="term" value="F:structural constituent of ribosome"/>
    <property type="evidence" value="ECO:0007669"/>
    <property type="project" value="InterPro"/>
</dbReference>
<dbReference type="GO" id="GO:0006412">
    <property type="term" value="P:translation"/>
    <property type="evidence" value="ECO:0007669"/>
    <property type="project" value="UniProtKB-UniRule"/>
</dbReference>
<dbReference type="CDD" id="cd00427">
    <property type="entry name" value="Ribosomal_L29_HIP"/>
    <property type="match status" value="1"/>
</dbReference>
<dbReference type="FunFam" id="1.10.287.310:FF:000001">
    <property type="entry name" value="50S ribosomal protein L29"/>
    <property type="match status" value="1"/>
</dbReference>
<dbReference type="Gene3D" id="1.10.287.310">
    <property type="match status" value="1"/>
</dbReference>
<dbReference type="HAMAP" id="MF_00374">
    <property type="entry name" value="Ribosomal_uL29"/>
    <property type="match status" value="1"/>
</dbReference>
<dbReference type="InterPro" id="IPR050063">
    <property type="entry name" value="Ribosomal_protein_uL29"/>
</dbReference>
<dbReference type="InterPro" id="IPR001854">
    <property type="entry name" value="Ribosomal_uL29"/>
</dbReference>
<dbReference type="InterPro" id="IPR018254">
    <property type="entry name" value="Ribosomal_uL29_CS"/>
</dbReference>
<dbReference type="InterPro" id="IPR036049">
    <property type="entry name" value="Ribosomal_uL29_sf"/>
</dbReference>
<dbReference type="NCBIfam" id="TIGR00012">
    <property type="entry name" value="L29"/>
    <property type="match status" value="1"/>
</dbReference>
<dbReference type="PANTHER" id="PTHR10916">
    <property type="entry name" value="60S RIBOSOMAL PROTEIN L35/50S RIBOSOMAL PROTEIN L29"/>
    <property type="match status" value="1"/>
</dbReference>
<dbReference type="PANTHER" id="PTHR10916:SF0">
    <property type="entry name" value="LARGE RIBOSOMAL SUBUNIT PROTEIN UL29C"/>
    <property type="match status" value="1"/>
</dbReference>
<dbReference type="Pfam" id="PF00831">
    <property type="entry name" value="Ribosomal_L29"/>
    <property type="match status" value="1"/>
</dbReference>
<dbReference type="SUPFAM" id="SSF46561">
    <property type="entry name" value="Ribosomal protein L29 (L29p)"/>
    <property type="match status" value="1"/>
</dbReference>
<dbReference type="PROSITE" id="PS00579">
    <property type="entry name" value="RIBOSOMAL_L29"/>
    <property type="match status" value="1"/>
</dbReference>
<name>RL29_CAUVC</name>
<accession>Q9A8U5</accession>
<proteinExistence type="inferred from homology"/>